<comment type="function">
    <text evidence="1">Catalyzes the decarboxylation of four acetate groups of uroporphyrinogen-III to yield coproporphyrinogen-III.</text>
</comment>
<comment type="catalytic activity">
    <reaction evidence="1">
        <text>uroporphyrinogen III + 4 H(+) = coproporphyrinogen III + 4 CO2</text>
        <dbReference type="Rhea" id="RHEA:19865"/>
        <dbReference type="ChEBI" id="CHEBI:15378"/>
        <dbReference type="ChEBI" id="CHEBI:16526"/>
        <dbReference type="ChEBI" id="CHEBI:57308"/>
        <dbReference type="ChEBI" id="CHEBI:57309"/>
        <dbReference type="EC" id="4.1.1.37"/>
    </reaction>
</comment>
<comment type="pathway">
    <text evidence="1">Porphyrin-containing compound metabolism; protoporphyrin-IX biosynthesis; coproporphyrinogen-III from 5-aminolevulinate: step 4/4.</text>
</comment>
<comment type="subunit">
    <text evidence="1">Homodimer.</text>
</comment>
<comment type="subcellular location">
    <subcellularLocation>
        <location evidence="1">Cytoplasm</location>
    </subcellularLocation>
</comment>
<comment type="similarity">
    <text evidence="1">Belongs to the uroporphyrinogen decarboxylase family.</text>
</comment>
<evidence type="ECO:0000255" key="1">
    <source>
        <dbReference type="HAMAP-Rule" id="MF_00218"/>
    </source>
</evidence>
<organism>
    <name type="scientific">Chelativorans sp. (strain BNC1)</name>
    <dbReference type="NCBI Taxonomy" id="266779"/>
    <lineage>
        <taxon>Bacteria</taxon>
        <taxon>Pseudomonadati</taxon>
        <taxon>Pseudomonadota</taxon>
        <taxon>Alphaproteobacteria</taxon>
        <taxon>Hyphomicrobiales</taxon>
        <taxon>Phyllobacteriaceae</taxon>
        <taxon>Chelativorans</taxon>
    </lineage>
</organism>
<reference key="1">
    <citation type="submission" date="2006-06" db="EMBL/GenBank/DDBJ databases">
        <title>Complete sequence of chromosome of Mesorhizobium sp. BNC1.</title>
        <authorList>
            <consortium name="US DOE Joint Genome Institute"/>
            <person name="Copeland A."/>
            <person name="Lucas S."/>
            <person name="Lapidus A."/>
            <person name="Barry K."/>
            <person name="Detter J.C."/>
            <person name="Glavina del Rio T."/>
            <person name="Hammon N."/>
            <person name="Israni S."/>
            <person name="Dalin E."/>
            <person name="Tice H."/>
            <person name="Pitluck S."/>
            <person name="Chertkov O."/>
            <person name="Brettin T."/>
            <person name="Bruce D."/>
            <person name="Han C."/>
            <person name="Tapia R."/>
            <person name="Gilna P."/>
            <person name="Schmutz J."/>
            <person name="Larimer F."/>
            <person name="Land M."/>
            <person name="Hauser L."/>
            <person name="Kyrpides N."/>
            <person name="Mikhailova N."/>
            <person name="Richardson P."/>
        </authorList>
    </citation>
    <scope>NUCLEOTIDE SEQUENCE [LARGE SCALE GENOMIC DNA]</scope>
    <source>
        <strain>BNC1</strain>
    </source>
</reference>
<proteinExistence type="inferred from homology"/>
<gene>
    <name evidence="1" type="primary">hemE</name>
    <name type="ordered locus">Meso_3476</name>
</gene>
<keyword id="KW-0963">Cytoplasm</keyword>
<keyword id="KW-0210">Decarboxylase</keyword>
<keyword id="KW-0456">Lyase</keyword>
<keyword id="KW-0627">Porphyrin biosynthesis</keyword>
<accession>Q11CM8</accession>
<feature type="chain" id="PRO_1000023919" description="Uroporphyrinogen decarboxylase">
    <location>
        <begin position="1"/>
        <end position="342"/>
    </location>
</feature>
<feature type="binding site" evidence="1">
    <location>
        <begin position="24"/>
        <end position="28"/>
    </location>
    <ligand>
        <name>substrate</name>
    </ligand>
</feature>
<feature type="binding site" evidence="1">
    <location>
        <position position="74"/>
    </location>
    <ligand>
        <name>substrate</name>
    </ligand>
</feature>
<feature type="binding site" evidence="1">
    <location>
        <position position="149"/>
    </location>
    <ligand>
        <name>substrate</name>
    </ligand>
</feature>
<feature type="binding site" evidence="1">
    <location>
        <position position="204"/>
    </location>
    <ligand>
        <name>substrate</name>
    </ligand>
</feature>
<feature type="binding site" evidence="1">
    <location>
        <position position="319"/>
    </location>
    <ligand>
        <name>substrate</name>
    </ligand>
</feature>
<feature type="site" description="Transition state stabilizer" evidence="1">
    <location>
        <position position="74"/>
    </location>
</feature>
<name>DCUP_CHESB</name>
<sequence>MAERKLLEALNGRTVFPPPIWLMRQAGRYLPEYRETRKKAGSFLDLCYNPELAVEVTLQPIRRFGFDAAILFSDILVIPHALGRDLRFEEGAGPLMSPIQANEIPGLDPNLIHNRLQPVYETVRRLRSELSEETALIGFCGAPWTVATYMIAGRGTPDQAPARLFGYRHPKEFSELLDTISAASADYLIRQIDEGADAVQIFDSWAGILDETSFDQWCLRPVAEIVRRVRERHPNVPIIGFPKGAGWLYSRYRQQTGVTALGLDWTVPLSEASRLQAEGPVQGNLDPMRLVAGGQALSKGVEDILSALGGAPFIFNLGHGITPETPIGHVEAMIQQVREGRL</sequence>
<protein>
    <recommendedName>
        <fullName evidence="1">Uroporphyrinogen decarboxylase</fullName>
        <shortName evidence="1">UPD</shortName>
        <shortName evidence="1">URO-D</shortName>
        <ecNumber evidence="1">4.1.1.37</ecNumber>
    </recommendedName>
</protein>
<dbReference type="EC" id="4.1.1.37" evidence="1"/>
<dbReference type="EMBL" id="CP000390">
    <property type="protein sequence ID" value="ABG64847.1"/>
    <property type="molecule type" value="Genomic_DNA"/>
</dbReference>
<dbReference type="SMR" id="Q11CM8"/>
<dbReference type="STRING" id="266779.Meso_3476"/>
<dbReference type="KEGG" id="mes:Meso_3476"/>
<dbReference type="eggNOG" id="COG0407">
    <property type="taxonomic scope" value="Bacteria"/>
</dbReference>
<dbReference type="HOGENOM" id="CLU_040933_0_0_5"/>
<dbReference type="OrthoDB" id="9806656at2"/>
<dbReference type="UniPathway" id="UPA00251">
    <property type="reaction ID" value="UER00321"/>
</dbReference>
<dbReference type="GO" id="GO:0005829">
    <property type="term" value="C:cytosol"/>
    <property type="evidence" value="ECO:0007669"/>
    <property type="project" value="TreeGrafter"/>
</dbReference>
<dbReference type="GO" id="GO:0004853">
    <property type="term" value="F:uroporphyrinogen decarboxylase activity"/>
    <property type="evidence" value="ECO:0007669"/>
    <property type="project" value="UniProtKB-UniRule"/>
</dbReference>
<dbReference type="GO" id="GO:0019353">
    <property type="term" value="P:protoporphyrinogen IX biosynthetic process from glutamate"/>
    <property type="evidence" value="ECO:0007669"/>
    <property type="project" value="TreeGrafter"/>
</dbReference>
<dbReference type="CDD" id="cd00717">
    <property type="entry name" value="URO-D"/>
    <property type="match status" value="1"/>
</dbReference>
<dbReference type="FunFam" id="3.20.20.210:FF:000007">
    <property type="entry name" value="Uroporphyrinogen decarboxylase"/>
    <property type="match status" value="1"/>
</dbReference>
<dbReference type="Gene3D" id="3.20.20.210">
    <property type="match status" value="1"/>
</dbReference>
<dbReference type="HAMAP" id="MF_00218">
    <property type="entry name" value="URO_D"/>
    <property type="match status" value="1"/>
</dbReference>
<dbReference type="InterPro" id="IPR038071">
    <property type="entry name" value="UROD/MetE-like_sf"/>
</dbReference>
<dbReference type="InterPro" id="IPR006361">
    <property type="entry name" value="Uroporphyrinogen_deCO2ase_HemE"/>
</dbReference>
<dbReference type="InterPro" id="IPR000257">
    <property type="entry name" value="Uroporphyrinogen_deCOase"/>
</dbReference>
<dbReference type="NCBIfam" id="TIGR01464">
    <property type="entry name" value="hemE"/>
    <property type="match status" value="1"/>
</dbReference>
<dbReference type="PANTHER" id="PTHR21091">
    <property type="entry name" value="METHYLTETRAHYDROFOLATE:HOMOCYSTEINE METHYLTRANSFERASE RELATED"/>
    <property type="match status" value="1"/>
</dbReference>
<dbReference type="PANTHER" id="PTHR21091:SF169">
    <property type="entry name" value="UROPORPHYRINOGEN DECARBOXYLASE"/>
    <property type="match status" value="1"/>
</dbReference>
<dbReference type="Pfam" id="PF01208">
    <property type="entry name" value="URO-D"/>
    <property type="match status" value="1"/>
</dbReference>
<dbReference type="SUPFAM" id="SSF51726">
    <property type="entry name" value="UROD/MetE-like"/>
    <property type="match status" value="1"/>
</dbReference>
<dbReference type="PROSITE" id="PS00906">
    <property type="entry name" value="UROD_1"/>
    <property type="match status" value="1"/>
</dbReference>
<dbReference type="PROSITE" id="PS00907">
    <property type="entry name" value="UROD_2"/>
    <property type="match status" value="1"/>
</dbReference>